<reference key="1">
    <citation type="journal article" date="2016" name="Genome Announc.">
        <title>Complete genome sequence of Alkaliphilus metalliredigens strain QYMF, an alkaliphilic and metal-reducing bacterium isolated from borax-contaminated leachate ponds.</title>
        <authorList>
            <person name="Hwang C."/>
            <person name="Copeland A."/>
            <person name="Lucas S."/>
            <person name="Lapidus A."/>
            <person name="Barry K."/>
            <person name="Detter J.C."/>
            <person name="Glavina Del Rio T."/>
            <person name="Hammon N."/>
            <person name="Israni S."/>
            <person name="Dalin E."/>
            <person name="Tice H."/>
            <person name="Pitluck S."/>
            <person name="Chertkov O."/>
            <person name="Brettin T."/>
            <person name="Bruce D."/>
            <person name="Han C."/>
            <person name="Schmutz J."/>
            <person name="Larimer F."/>
            <person name="Land M.L."/>
            <person name="Hauser L."/>
            <person name="Kyrpides N."/>
            <person name="Mikhailova N."/>
            <person name="Ye Q."/>
            <person name="Zhou J."/>
            <person name="Richardson P."/>
            <person name="Fields M.W."/>
        </authorList>
    </citation>
    <scope>NUCLEOTIDE SEQUENCE [LARGE SCALE GENOMIC DNA]</scope>
    <source>
        <strain>QYMF</strain>
    </source>
</reference>
<keyword id="KW-0963">Cytoplasm</keyword>
<keyword id="KW-0369">Histidine metabolism</keyword>
<keyword id="KW-0456">Lyase</keyword>
<keyword id="KW-1185">Reference proteome</keyword>
<evidence type="ECO:0000250" key="1"/>
<evidence type="ECO:0000255" key="2">
    <source>
        <dbReference type="HAMAP-Rule" id="MF_00229"/>
    </source>
</evidence>
<feature type="chain" id="PRO_1000100431" description="Histidine ammonia-lyase">
    <location>
        <begin position="1"/>
        <end position="507"/>
    </location>
</feature>
<feature type="modified residue" description="2,3-didehydroalanine (Ser)" evidence="2">
    <location>
        <position position="144"/>
    </location>
</feature>
<feature type="cross-link" description="5-imidazolinone (Ser-Gly)" evidence="1">
    <location>
        <begin position="143"/>
        <end position="145"/>
    </location>
</feature>
<protein>
    <recommendedName>
        <fullName evidence="2">Histidine ammonia-lyase</fullName>
        <shortName evidence="2">Histidase</shortName>
        <ecNumber evidence="2">4.3.1.3</ecNumber>
    </recommendedName>
</protein>
<proteinExistence type="inferred from homology"/>
<organism>
    <name type="scientific">Alkaliphilus metalliredigens (strain QYMF)</name>
    <dbReference type="NCBI Taxonomy" id="293826"/>
    <lineage>
        <taxon>Bacteria</taxon>
        <taxon>Bacillati</taxon>
        <taxon>Bacillota</taxon>
        <taxon>Clostridia</taxon>
        <taxon>Peptostreptococcales</taxon>
        <taxon>Natronincolaceae</taxon>
        <taxon>Alkaliphilus</taxon>
    </lineage>
</organism>
<gene>
    <name evidence="2" type="primary">hutH</name>
    <name type="ordered locus">Amet_3149</name>
</gene>
<dbReference type="EC" id="4.3.1.3" evidence="2"/>
<dbReference type="EMBL" id="CP000724">
    <property type="protein sequence ID" value="ABR49288.1"/>
    <property type="molecule type" value="Genomic_DNA"/>
</dbReference>
<dbReference type="RefSeq" id="WP_012064254.1">
    <property type="nucleotide sequence ID" value="NC_009633.1"/>
</dbReference>
<dbReference type="SMR" id="A6TSX0"/>
<dbReference type="STRING" id="293826.Amet_3149"/>
<dbReference type="KEGG" id="amt:Amet_3149"/>
<dbReference type="eggNOG" id="COG2986">
    <property type="taxonomic scope" value="Bacteria"/>
</dbReference>
<dbReference type="HOGENOM" id="CLU_014801_4_0_9"/>
<dbReference type="OrthoDB" id="9806955at2"/>
<dbReference type="UniPathway" id="UPA00379">
    <property type="reaction ID" value="UER00549"/>
</dbReference>
<dbReference type="Proteomes" id="UP000001572">
    <property type="component" value="Chromosome"/>
</dbReference>
<dbReference type="GO" id="GO:0005737">
    <property type="term" value="C:cytoplasm"/>
    <property type="evidence" value="ECO:0007669"/>
    <property type="project" value="UniProtKB-SubCell"/>
</dbReference>
<dbReference type="GO" id="GO:0004397">
    <property type="term" value="F:histidine ammonia-lyase activity"/>
    <property type="evidence" value="ECO:0007669"/>
    <property type="project" value="UniProtKB-UniRule"/>
</dbReference>
<dbReference type="GO" id="GO:0019556">
    <property type="term" value="P:L-histidine catabolic process to glutamate and formamide"/>
    <property type="evidence" value="ECO:0007669"/>
    <property type="project" value="UniProtKB-UniPathway"/>
</dbReference>
<dbReference type="GO" id="GO:0019557">
    <property type="term" value="P:L-histidine catabolic process to glutamate and formate"/>
    <property type="evidence" value="ECO:0007669"/>
    <property type="project" value="UniProtKB-UniPathway"/>
</dbReference>
<dbReference type="CDD" id="cd00332">
    <property type="entry name" value="PAL-HAL"/>
    <property type="match status" value="1"/>
</dbReference>
<dbReference type="FunFam" id="1.10.275.10:FF:000005">
    <property type="entry name" value="Histidine ammonia-lyase"/>
    <property type="match status" value="1"/>
</dbReference>
<dbReference type="FunFam" id="1.20.200.10:FF:000003">
    <property type="entry name" value="Histidine ammonia-lyase"/>
    <property type="match status" value="1"/>
</dbReference>
<dbReference type="Gene3D" id="1.20.200.10">
    <property type="entry name" value="Fumarase/aspartase (Central domain)"/>
    <property type="match status" value="1"/>
</dbReference>
<dbReference type="Gene3D" id="1.10.275.10">
    <property type="entry name" value="Fumarase/aspartase (N-terminal domain)"/>
    <property type="match status" value="1"/>
</dbReference>
<dbReference type="HAMAP" id="MF_00229">
    <property type="entry name" value="His_ammonia_lyase"/>
    <property type="match status" value="1"/>
</dbReference>
<dbReference type="InterPro" id="IPR001106">
    <property type="entry name" value="Aromatic_Lyase"/>
</dbReference>
<dbReference type="InterPro" id="IPR024083">
    <property type="entry name" value="Fumarase/histidase_N"/>
</dbReference>
<dbReference type="InterPro" id="IPR005921">
    <property type="entry name" value="HutH"/>
</dbReference>
<dbReference type="InterPro" id="IPR008948">
    <property type="entry name" value="L-Aspartase-like"/>
</dbReference>
<dbReference type="InterPro" id="IPR022313">
    <property type="entry name" value="Phe/His_NH3-lyase_AS"/>
</dbReference>
<dbReference type="NCBIfam" id="TIGR01225">
    <property type="entry name" value="hutH"/>
    <property type="match status" value="1"/>
</dbReference>
<dbReference type="NCBIfam" id="NF006871">
    <property type="entry name" value="PRK09367.1"/>
    <property type="match status" value="1"/>
</dbReference>
<dbReference type="PANTHER" id="PTHR10362">
    <property type="entry name" value="HISTIDINE AMMONIA-LYASE"/>
    <property type="match status" value="1"/>
</dbReference>
<dbReference type="Pfam" id="PF00221">
    <property type="entry name" value="Lyase_aromatic"/>
    <property type="match status" value="1"/>
</dbReference>
<dbReference type="SUPFAM" id="SSF48557">
    <property type="entry name" value="L-aspartase-like"/>
    <property type="match status" value="1"/>
</dbReference>
<dbReference type="PROSITE" id="PS00488">
    <property type="entry name" value="PAL_HISTIDASE"/>
    <property type="match status" value="1"/>
</dbReference>
<name>HUTH_ALKMQ</name>
<sequence>MKKVSINGNDLTLEEMIMVAREYCSITIEPEAMVRVANTRKVVERYVEEERVVYGITTGFGKFSDVAISKDQTEMLQRNLIISHACGVGEPLKEEVVRGVLLLRANALAKGYSGVRPNTLETLINMLNKGVHPIIPEKGSLGSSGDLAPLAHMVLVMMGEGEATYKGNKMSGKEAMEKAGIPPVVLSAKEGLALINGTQVMTAIGALLIYDCQKLIKLADIAGALTLEAQRGIIDAFDHKVHRVRPHQGQQQTAQNIVNLVAGSTLITRQGEVRVQDAYTLRCIPQIHGASRDAIMYAVDKVNIEINGATDNPLIFPEEDEVISGGNFHGQPMALTFDFLGIAIAELANVSERRIERLVNPQLSGLPAFLTAKGGLNSGFMITQYAAASLVSENKILAHPASVDSIPSSANQEDHVSMGTIAARKARSIYENTVNVLGVELMAASQAVEFYDGYELGIGTRRAYDTIRKSVAHLDEDRVMYVDMNRCAELVFNHKIVDEVEKVVSIL</sequence>
<comment type="catalytic activity">
    <reaction evidence="2">
        <text>L-histidine = trans-urocanate + NH4(+)</text>
        <dbReference type="Rhea" id="RHEA:21232"/>
        <dbReference type="ChEBI" id="CHEBI:17771"/>
        <dbReference type="ChEBI" id="CHEBI:28938"/>
        <dbReference type="ChEBI" id="CHEBI:57595"/>
        <dbReference type="EC" id="4.3.1.3"/>
    </reaction>
</comment>
<comment type="pathway">
    <text evidence="2">Amino-acid degradation; L-histidine degradation into L-glutamate; N-formimidoyl-L-glutamate from L-histidine: step 1/3.</text>
</comment>
<comment type="subcellular location">
    <subcellularLocation>
        <location evidence="2">Cytoplasm</location>
    </subcellularLocation>
</comment>
<comment type="PTM">
    <text evidence="2">Contains an active site 4-methylidene-imidazol-5-one (MIO), which is formed autocatalytically by cyclization and dehydration of residues Ser-Ser-Gly.</text>
</comment>
<comment type="similarity">
    <text evidence="2">Belongs to the PAL/histidase family.</text>
</comment>
<accession>A6TSX0</accession>